<name>BR2A_PELLE</name>
<dbReference type="PIR" id="A55998">
    <property type="entry name" value="A55998"/>
</dbReference>
<dbReference type="SMR" id="P40837"/>
<dbReference type="GO" id="GO:0005576">
    <property type="term" value="C:extracellular region"/>
    <property type="evidence" value="ECO:0007669"/>
    <property type="project" value="UniProtKB-SubCell"/>
</dbReference>
<dbReference type="GO" id="GO:0042742">
    <property type="term" value="P:defense response to bacterium"/>
    <property type="evidence" value="ECO:0007669"/>
    <property type="project" value="UniProtKB-KW"/>
</dbReference>
<dbReference type="GO" id="GO:0031640">
    <property type="term" value="P:killing of cells of another organism"/>
    <property type="evidence" value="ECO:0007669"/>
    <property type="project" value="UniProtKB-KW"/>
</dbReference>
<dbReference type="InterPro" id="IPR012521">
    <property type="entry name" value="Antimicrobial_frog_2"/>
</dbReference>
<dbReference type="Pfam" id="PF08023">
    <property type="entry name" value="Antimicrobial_2"/>
    <property type="match status" value="1"/>
</dbReference>
<accession>P40837</accession>
<proteinExistence type="evidence at protein level"/>
<evidence type="ECO:0000269" key="1">
    <source>
    </source>
</evidence>
<evidence type="ECO:0000303" key="2">
    <source>
    </source>
</evidence>
<evidence type="ECO:0000305" key="3"/>
<evidence type="ECO:0000305" key="4">
    <source>
    </source>
</evidence>
<organism>
    <name type="scientific">Pelophylax lessonae</name>
    <name type="common">Pool frog</name>
    <name type="synonym">Rana lessonae</name>
    <dbReference type="NCBI Taxonomy" id="45623"/>
    <lineage>
        <taxon>Eukaryota</taxon>
        <taxon>Metazoa</taxon>
        <taxon>Chordata</taxon>
        <taxon>Craniata</taxon>
        <taxon>Vertebrata</taxon>
        <taxon>Euteleostomi</taxon>
        <taxon>Amphibia</taxon>
        <taxon>Batrachia</taxon>
        <taxon>Anura</taxon>
        <taxon>Neobatrachia</taxon>
        <taxon>Ranoidea</taxon>
        <taxon>Ranidae</taxon>
        <taxon>Pelophylax</taxon>
    </lineage>
</organism>
<reference key="1">
    <citation type="journal article" date="1994" name="J. Biol. Chem.">
        <title>Antimicrobial peptides from skin secretions of Rana esculenta. Molecular cloning of cDNAs encoding esculentin and brevinins and isolation of new active peptides.</title>
        <authorList>
            <person name="Simmaco M."/>
            <person name="Mignogna G."/>
            <person name="Barra D."/>
            <person name="Bossa F."/>
        </authorList>
    </citation>
    <scope>PROTEIN SEQUENCE</scope>
    <scope>DISULFIDE BOND</scope>
    <scope>SUBCELLULAR LOCATION</scope>
    <source>
        <tissue>Skin secretion</tissue>
    </source>
</reference>
<feature type="peptide" id="PRO_0000044643" description="Brevinin-2Ea" evidence="1">
    <location>
        <begin position="1"/>
        <end position="33"/>
    </location>
</feature>
<feature type="disulfide bond" evidence="1">
    <location>
        <begin position="27"/>
        <end position="33"/>
    </location>
</feature>
<keyword id="KW-0878">Amphibian defense peptide</keyword>
<keyword id="KW-0044">Antibiotic</keyword>
<keyword id="KW-0929">Antimicrobial</keyword>
<keyword id="KW-0204">Cytolysis</keyword>
<keyword id="KW-0903">Direct protein sequencing</keyword>
<keyword id="KW-1015">Disulfide bond</keyword>
<keyword id="KW-0354">Hemolysis</keyword>
<keyword id="KW-0964">Secreted</keyword>
<comment type="function">
    <text>Shows antibacterial activity against representative Gram-negative and Gram-positive bacterial species, and hemolytic activity.</text>
</comment>
<comment type="subcellular location">
    <subcellularLocation>
        <location evidence="1">Secreted</location>
    </subcellularLocation>
</comment>
<comment type="tissue specificity">
    <text evidence="4">Expressed by the skin glands.</text>
</comment>
<comment type="similarity">
    <text evidence="3">Belongs to the frog skin active peptide (FSAP) family. Brevinin subfamily.</text>
</comment>
<comment type="online information" name="The antimicrobial peptide database">
    <link uri="https://wangapd3.com/database/query_output.php?ID=00076"/>
</comment>
<protein>
    <recommendedName>
        <fullName evidence="2">Brevinin-2Ea</fullName>
    </recommendedName>
</protein>
<sequence length="33" mass="3245">GILDTLKNLAISAAKGAAQGLVNKASCKLSGQC</sequence>